<protein>
    <recommendedName>
        <fullName evidence="1">Ribosomal protein uS12 methylthiotransferase RimO</fullName>
        <shortName evidence="1">uS12 MTTase</shortName>
        <shortName evidence="1">uS12 methylthiotransferase</shortName>
        <ecNumber evidence="1">2.8.4.4</ecNumber>
    </recommendedName>
    <alternativeName>
        <fullName evidence="1">Ribosomal protein uS12 (aspartate-C(3))-methylthiotransferase</fullName>
    </alternativeName>
    <alternativeName>
        <fullName evidence="1">Ribosome maturation factor RimO</fullName>
    </alternativeName>
</protein>
<name>RIMO_ECOSM</name>
<evidence type="ECO:0000255" key="1">
    <source>
        <dbReference type="HAMAP-Rule" id="MF_01865"/>
    </source>
</evidence>
<evidence type="ECO:0000255" key="2">
    <source>
        <dbReference type="PROSITE-ProRule" id="PRU01266"/>
    </source>
</evidence>
<gene>
    <name evidence="1" type="primary">rimO</name>
    <name type="ordered locus">EcSMS35_0862</name>
</gene>
<proteinExistence type="inferred from homology"/>
<organism>
    <name type="scientific">Escherichia coli (strain SMS-3-5 / SECEC)</name>
    <dbReference type="NCBI Taxonomy" id="439855"/>
    <lineage>
        <taxon>Bacteria</taxon>
        <taxon>Pseudomonadati</taxon>
        <taxon>Pseudomonadota</taxon>
        <taxon>Gammaproteobacteria</taxon>
        <taxon>Enterobacterales</taxon>
        <taxon>Enterobacteriaceae</taxon>
        <taxon>Escherichia</taxon>
    </lineage>
</organism>
<reference key="1">
    <citation type="journal article" date="2008" name="J. Bacteriol.">
        <title>Insights into the environmental resistance gene pool from the genome sequence of the multidrug-resistant environmental isolate Escherichia coli SMS-3-5.</title>
        <authorList>
            <person name="Fricke W.F."/>
            <person name="Wright M.S."/>
            <person name="Lindell A.H."/>
            <person name="Harkins D.M."/>
            <person name="Baker-Austin C."/>
            <person name="Ravel J."/>
            <person name="Stepanauskas R."/>
        </authorList>
    </citation>
    <scope>NUCLEOTIDE SEQUENCE [LARGE SCALE GENOMIC DNA]</scope>
    <source>
        <strain>SMS-3-5 / SECEC</strain>
    </source>
</reference>
<keyword id="KW-0004">4Fe-4S</keyword>
<keyword id="KW-0963">Cytoplasm</keyword>
<keyword id="KW-0408">Iron</keyword>
<keyword id="KW-0411">Iron-sulfur</keyword>
<keyword id="KW-0479">Metal-binding</keyword>
<keyword id="KW-0949">S-adenosyl-L-methionine</keyword>
<keyword id="KW-0808">Transferase</keyword>
<feature type="chain" id="PRO_0000374820" description="Ribosomal protein uS12 methylthiotransferase RimO">
    <location>
        <begin position="1"/>
        <end position="441"/>
    </location>
</feature>
<feature type="domain" description="MTTase N-terminal" evidence="1">
    <location>
        <begin position="8"/>
        <end position="118"/>
    </location>
</feature>
<feature type="domain" description="Radical SAM core" evidence="2">
    <location>
        <begin position="136"/>
        <end position="373"/>
    </location>
</feature>
<feature type="domain" description="TRAM" evidence="1">
    <location>
        <begin position="376"/>
        <end position="441"/>
    </location>
</feature>
<feature type="binding site" evidence="1">
    <location>
        <position position="17"/>
    </location>
    <ligand>
        <name>[4Fe-4S] cluster</name>
        <dbReference type="ChEBI" id="CHEBI:49883"/>
        <label>1</label>
    </ligand>
</feature>
<feature type="binding site" evidence="1">
    <location>
        <position position="53"/>
    </location>
    <ligand>
        <name>[4Fe-4S] cluster</name>
        <dbReference type="ChEBI" id="CHEBI:49883"/>
        <label>1</label>
    </ligand>
</feature>
<feature type="binding site" evidence="1">
    <location>
        <position position="82"/>
    </location>
    <ligand>
        <name>[4Fe-4S] cluster</name>
        <dbReference type="ChEBI" id="CHEBI:49883"/>
        <label>1</label>
    </ligand>
</feature>
<feature type="binding site" evidence="1">
    <location>
        <position position="150"/>
    </location>
    <ligand>
        <name>[4Fe-4S] cluster</name>
        <dbReference type="ChEBI" id="CHEBI:49883"/>
        <label>2</label>
        <note>4Fe-4S-S-AdoMet</note>
    </ligand>
</feature>
<feature type="binding site" evidence="1">
    <location>
        <position position="154"/>
    </location>
    <ligand>
        <name>[4Fe-4S] cluster</name>
        <dbReference type="ChEBI" id="CHEBI:49883"/>
        <label>2</label>
        <note>4Fe-4S-S-AdoMet</note>
    </ligand>
</feature>
<feature type="binding site" evidence="1">
    <location>
        <position position="157"/>
    </location>
    <ligand>
        <name>[4Fe-4S] cluster</name>
        <dbReference type="ChEBI" id="CHEBI:49883"/>
        <label>2</label>
        <note>4Fe-4S-S-AdoMet</note>
    </ligand>
</feature>
<sequence length="441" mass="49582">MSKVTPQPKIGFVSLGCPKNLVDSERILTELRTEGYDVVPSYDDADMVIVNTCGFIDSAVQESLEAIGEALNENGKVIVTGCLGAKEDQIREVHPKVLEITGPHSYEQVLEHVHHYVPKPKHNPFLSLVPEQGVKLTPRHYAYLKISEGCNHRCTFCIIPSMRGDLVSRPIGEVLSEAKRLVDAGVKEILVISQDTSAYGVDVKHRTGFHNGEPVKTSMVSLCEQLSKLGIWTRLHYVYPYPHVDDVIPLMAEGKILPYLDIPLQHASPRILKLMKRPGSVDRQLARIKQWREICPELTLRSTFIVGFPGETEEDFQMLLDFLKEARLDRVGCFKYSPVEGADANALPDQVPEEVKEERWNRFMQLQQQISAERLQEKVGREILVIIDEVDEEGAIGRSMADAPEIDGAVYLNGETNVKPGDILRVKVEHADEYDLWGSRV</sequence>
<dbReference type="EC" id="2.8.4.4" evidence="1"/>
<dbReference type="EMBL" id="CP000970">
    <property type="protein sequence ID" value="ACB15833.1"/>
    <property type="molecule type" value="Genomic_DNA"/>
</dbReference>
<dbReference type="RefSeq" id="WP_000049367.1">
    <property type="nucleotide sequence ID" value="NC_010498.1"/>
</dbReference>
<dbReference type="SMR" id="B1LMD0"/>
<dbReference type="GeneID" id="75204700"/>
<dbReference type="KEGG" id="ecm:EcSMS35_0862"/>
<dbReference type="HOGENOM" id="CLU_018697_0_0_6"/>
<dbReference type="Proteomes" id="UP000007011">
    <property type="component" value="Chromosome"/>
</dbReference>
<dbReference type="GO" id="GO:0005829">
    <property type="term" value="C:cytosol"/>
    <property type="evidence" value="ECO:0007669"/>
    <property type="project" value="TreeGrafter"/>
</dbReference>
<dbReference type="GO" id="GO:0051539">
    <property type="term" value="F:4 iron, 4 sulfur cluster binding"/>
    <property type="evidence" value="ECO:0007669"/>
    <property type="project" value="UniProtKB-UniRule"/>
</dbReference>
<dbReference type="GO" id="GO:0035599">
    <property type="term" value="F:aspartic acid methylthiotransferase activity"/>
    <property type="evidence" value="ECO:0007669"/>
    <property type="project" value="TreeGrafter"/>
</dbReference>
<dbReference type="GO" id="GO:0046872">
    <property type="term" value="F:metal ion binding"/>
    <property type="evidence" value="ECO:0007669"/>
    <property type="project" value="UniProtKB-KW"/>
</dbReference>
<dbReference type="GO" id="GO:0103039">
    <property type="term" value="F:protein methylthiotransferase activity"/>
    <property type="evidence" value="ECO:0007669"/>
    <property type="project" value="UniProtKB-EC"/>
</dbReference>
<dbReference type="GO" id="GO:0006400">
    <property type="term" value="P:tRNA modification"/>
    <property type="evidence" value="ECO:0007669"/>
    <property type="project" value="InterPro"/>
</dbReference>
<dbReference type="CDD" id="cd01335">
    <property type="entry name" value="Radical_SAM"/>
    <property type="match status" value="1"/>
</dbReference>
<dbReference type="FunFam" id="2.40.50.140:FF:000060">
    <property type="entry name" value="Ribosomal protein S12 methylthiotransferase RimO"/>
    <property type="match status" value="1"/>
</dbReference>
<dbReference type="FunFam" id="3.40.50.12160:FF:000002">
    <property type="entry name" value="Ribosomal protein S12 methylthiotransferase RimO"/>
    <property type="match status" value="1"/>
</dbReference>
<dbReference type="FunFam" id="3.80.30.20:FF:000001">
    <property type="entry name" value="tRNA-2-methylthio-N(6)-dimethylallyladenosine synthase 2"/>
    <property type="match status" value="1"/>
</dbReference>
<dbReference type="Gene3D" id="3.40.50.12160">
    <property type="entry name" value="Methylthiotransferase, N-terminal domain"/>
    <property type="match status" value="1"/>
</dbReference>
<dbReference type="Gene3D" id="2.40.50.140">
    <property type="entry name" value="Nucleic acid-binding proteins"/>
    <property type="match status" value="1"/>
</dbReference>
<dbReference type="Gene3D" id="3.80.30.20">
    <property type="entry name" value="tm_1862 like domain"/>
    <property type="match status" value="1"/>
</dbReference>
<dbReference type="HAMAP" id="MF_01865">
    <property type="entry name" value="MTTase_RimO"/>
    <property type="match status" value="1"/>
</dbReference>
<dbReference type="InterPro" id="IPR006638">
    <property type="entry name" value="Elp3/MiaA/NifB-like_rSAM"/>
</dbReference>
<dbReference type="InterPro" id="IPR005839">
    <property type="entry name" value="Methylthiotransferase"/>
</dbReference>
<dbReference type="InterPro" id="IPR020612">
    <property type="entry name" value="Methylthiotransferase_CS"/>
</dbReference>
<dbReference type="InterPro" id="IPR013848">
    <property type="entry name" value="Methylthiotransferase_N"/>
</dbReference>
<dbReference type="InterPro" id="IPR038135">
    <property type="entry name" value="Methylthiotransferase_N_sf"/>
</dbReference>
<dbReference type="InterPro" id="IPR012340">
    <property type="entry name" value="NA-bd_OB-fold"/>
</dbReference>
<dbReference type="InterPro" id="IPR005840">
    <property type="entry name" value="Ribosomal_uS12_MeSTrfase_RimO"/>
</dbReference>
<dbReference type="InterPro" id="IPR007197">
    <property type="entry name" value="rSAM"/>
</dbReference>
<dbReference type="InterPro" id="IPR023404">
    <property type="entry name" value="rSAM_horseshoe"/>
</dbReference>
<dbReference type="InterPro" id="IPR002792">
    <property type="entry name" value="TRAM_dom"/>
</dbReference>
<dbReference type="NCBIfam" id="TIGR01125">
    <property type="entry name" value="30S ribosomal protein S12 methylthiotransferase RimO"/>
    <property type="match status" value="1"/>
</dbReference>
<dbReference type="NCBIfam" id="TIGR00089">
    <property type="entry name" value="MiaB/RimO family radical SAM methylthiotransferase"/>
    <property type="match status" value="1"/>
</dbReference>
<dbReference type="PANTHER" id="PTHR43837">
    <property type="entry name" value="RIBOSOMAL PROTEIN S12 METHYLTHIOTRANSFERASE RIMO"/>
    <property type="match status" value="1"/>
</dbReference>
<dbReference type="PANTHER" id="PTHR43837:SF1">
    <property type="entry name" value="RIBOSOMAL PROTEIN US12 METHYLTHIOTRANSFERASE RIMO"/>
    <property type="match status" value="1"/>
</dbReference>
<dbReference type="Pfam" id="PF04055">
    <property type="entry name" value="Radical_SAM"/>
    <property type="match status" value="1"/>
</dbReference>
<dbReference type="Pfam" id="PF18693">
    <property type="entry name" value="TRAM_2"/>
    <property type="match status" value="1"/>
</dbReference>
<dbReference type="Pfam" id="PF00919">
    <property type="entry name" value="UPF0004"/>
    <property type="match status" value="1"/>
</dbReference>
<dbReference type="SFLD" id="SFLDG01082">
    <property type="entry name" value="B12-binding_domain_containing"/>
    <property type="match status" value="1"/>
</dbReference>
<dbReference type="SFLD" id="SFLDS00029">
    <property type="entry name" value="Radical_SAM"/>
    <property type="match status" value="1"/>
</dbReference>
<dbReference type="SFLD" id="SFLDF00274">
    <property type="entry name" value="ribosomal_protein_S12_methylth"/>
    <property type="match status" value="1"/>
</dbReference>
<dbReference type="SMART" id="SM00729">
    <property type="entry name" value="Elp3"/>
    <property type="match status" value="1"/>
</dbReference>
<dbReference type="SUPFAM" id="SSF102114">
    <property type="entry name" value="Radical SAM enzymes"/>
    <property type="match status" value="1"/>
</dbReference>
<dbReference type="PROSITE" id="PS51449">
    <property type="entry name" value="MTTASE_N"/>
    <property type="match status" value="1"/>
</dbReference>
<dbReference type="PROSITE" id="PS01278">
    <property type="entry name" value="MTTASE_RADICAL"/>
    <property type="match status" value="1"/>
</dbReference>
<dbReference type="PROSITE" id="PS51918">
    <property type="entry name" value="RADICAL_SAM"/>
    <property type="match status" value="1"/>
</dbReference>
<dbReference type="PROSITE" id="PS50926">
    <property type="entry name" value="TRAM"/>
    <property type="match status" value="1"/>
</dbReference>
<comment type="function">
    <text evidence="1">Catalyzes the methylthiolation of an aspartic acid residue of ribosomal protein uS12.</text>
</comment>
<comment type="catalytic activity">
    <reaction evidence="1">
        <text>L-aspartate(89)-[ribosomal protein uS12]-hydrogen + (sulfur carrier)-SH + AH2 + 2 S-adenosyl-L-methionine = 3-methylsulfanyl-L-aspartate(89)-[ribosomal protein uS12]-hydrogen + (sulfur carrier)-H + 5'-deoxyadenosine + L-methionine + A + S-adenosyl-L-homocysteine + 2 H(+)</text>
        <dbReference type="Rhea" id="RHEA:37087"/>
        <dbReference type="Rhea" id="RHEA-COMP:10460"/>
        <dbReference type="Rhea" id="RHEA-COMP:10461"/>
        <dbReference type="Rhea" id="RHEA-COMP:14737"/>
        <dbReference type="Rhea" id="RHEA-COMP:14739"/>
        <dbReference type="ChEBI" id="CHEBI:13193"/>
        <dbReference type="ChEBI" id="CHEBI:15378"/>
        <dbReference type="ChEBI" id="CHEBI:17319"/>
        <dbReference type="ChEBI" id="CHEBI:17499"/>
        <dbReference type="ChEBI" id="CHEBI:29917"/>
        <dbReference type="ChEBI" id="CHEBI:29961"/>
        <dbReference type="ChEBI" id="CHEBI:57844"/>
        <dbReference type="ChEBI" id="CHEBI:57856"/>
        <dbReference type="ChEBI" id="CHEBI:59789"/>
        <dbReference type="ChEBI" id="CHEBI:64428"/>
        <dbReference type="ChEBI" id="CHEBI:73599"/>
        <dbReference type="EC" id="2.8.4.4"/>
    </reaction>
</comment>
<comment type="cofactor">
    <cofactor evidence="1">
        <name>[4Fe-4S] cluster</name>
        <dbReference type="ChEBI" id="CHEBI:49883"/>
    </cofactor>
    <text evidence="1">Binds 2 [4Fe-4S] clusters. One cluster is coordinated with 3 cysteines and an exchangeable S-adenosyl-L-methionine.</text>
</comment>
<comment type="subcellular location">
    <subcellularLocation>
        <location evidence="1">Cytoplasm</location>
    </subcellularLocation>
</comment>
<comment type="similarity">
    <text evidence="1">Belongs to the methylthiotransferase family. RimO subfamily.</text>
</comment>
<accession>B1LMD0</accession>